<protein>
    <recommendedName>
        <fullName>UPF0056 inner membrane protein MarC</fullName>
    </recommendedName>
</protein>
<evidence type="ECO:0000250" key="1"/>
<evidence type="ECO:0000255" key="2"/>
<evidence type="ECO:0000305" key="3"/>
<organism>
    <name type="scientific">Escherichia coli O139:H28 (strain E24377A / ETEC)</name>
    <dbReference type="NCBI Taxonomy" id="331111"/>
    <lineage>
        <taxon>Bacteria</taxon>
        <taxon>Pseudomonadati</taxon>
        <taxon>Pseudomonadota</taxon>
        <taxon>Gammaproteobacteria</taxon>
        <taxon>Enterobacterales</taxon>
        <taxon>Enterobacteriaceae</taxon>
        <taxon>Escherichia</taxon>
    </lineage>
</organism>
<name>MARC_ECO24</name>
<proteinExistence type="inferred from homology"/>
<keyword id="KW-0997">Cell inner membrane</keyword>
<keyword id="KW-1003">Cell membrane</keyword>
<keyword id="KW-0472">Membrane</keyword>
<keyword id="KW-1185">Reference proteome</keyword>
<keyword id="KW-0812">Transmembrane</keyword>
<keyword id="KW-1133">Transmembrane helix</keyword>
<feature type="chain" id="PRO_0000343816" description="UPF0056 inner membrane protein MarC">
    <location>
        <begin position="1"/>
        <end position="221"/>
    </location>
</feature>
<feature type="topological domain" description="Periplasmic" evidence="2">
    <location>
        <begin position="1"/>
        <end position="7"/>
    </location>
</feature>
<feature type="transmembrane region" description="Helical" evidence="2">
    <location>
        <begin position="8"/>
        <end position="28"/>
    </location>
</feature>
<feature type="topological domain" description="Cytoplasmic" evidence="2">
    <location>
        <begin position="29"/>
        <end position="44"/>
    </location>
</feature>
<feature type="transmembrane region" description="Helical" evidence="2">
    <location>
        <begin position="45"/>
        <end position="65"/>
    </location>
</feature>
<feature type="topological domain" description="Periplasmic" evidence="2">
    <location>
        <begin position="66"/>
        <end position="68"/>
    </location>
</feature>
<feature type="transmembrane region" description="Helical" evidence="2">
    <location>
        <begin position="69"/>
        <end position="89"/>
    </location>
</feature>
<feature type="topological domain" description="Cytoplasmic" evidence="2">
    <location>
        <begin position="90"/>
        <end position="118"/>
    </location>
</feature>
<feature type="transmembrane region" description="Helical" evidence="2">
    <location>
        <begin position="119"/>
        <end position="139"/>
    </location>
</feature>
<feature type="topological domain" description="Periplasmic" evidence="2">
    <location>
        <begin position="140"/>
        <end position="154"/>
    </location>
</feature>
<feature type="transmembrane region" description="Helical" evidence="2">
    <location>
        <begin position="155"/>
        <end position="175"/>
    </location>
</feature>
<feature type="topological domain" description="Cytoplasmic" evidence="2">
    <location>
        <begin position="176"/>
        <end position="196"/>
    </location>
</feature>
<feature type="transmembrane region" description="Helical" evidence="2">
    <location>
        <begin position="197"/>
        <end position="217"/>
    </location>
</feature>
<feature type="topological domain" description="Periplasmic" evidence="2">
    <location>
        <begin position="218"/>
        <end position="221"/>
    </location>
</feature>
<dbReference type="EMBL" id="CP000800">
    <property type="protein sequence ID" value="ABV21082.1"/>
    <property type="molecule type" value="Genomic_DNA"/>
</dbReference>
<dbReference type="RefSeq" id="WP_000885033.1">
    <property type="nucleotide sequence ID" value="NC_009801.1"/>
</dbReference>
<dbReference type="GeneID" id="93775693"/>
<dbReference type="KEGG" id="ecw:EcE24377A_1731"/>
<dbReference type="HOGENOM" id="CLU_079909_2_0_6"/>
<dbReference type="Proteomes" id="UP000001122">
    <property type="component" value="Chromosome"/>
</dbReference>
<dbReference type="GO" id="GO:0005886">
    <property type="term" value="C:plasma membrane"/>
    <property type="evidence" value="ECO:0007669"/>
    <property type="project" value="UniProtKB-SubCell"/>
</dbReference>
<dbReference type="InterPro" id="IPR002771">
    <property type="entry name" value="Multi_antbiot-R_MarC"/>
</dbReference>
<dbReference type="NCBIfam" id="TIGR00427">
    <property type="entry name" value="NAAT family transporter"/>
    <property type="match status" value="1"/>
</dbReference>
<dbReference type="NCBIfam" id="NF008228">
    <property type="entry name" value="PRK10995.1"/>
    <property type="match status" value="1"/>
</dbReference>
<dbReference type="PANTHER" id="PTHR33508:SF2">
    <property type="entry name" value="UPF0056 INNER MEMBRANE PROTEIN MARC"/>
    <property type="match status" value="1"/>
</dbReference>
<dbReference type="PANTHER" id="PTHR33508">
    <property type="entry name" value="UPF0056 MEMBRANE PROTEIN YHCE"/>
    <property type="match status" value="1"/>
</dbReference>
<dbReference type="Pfam" id="PF01914">
    <property type="entry name" value="MarC"/>
    <property type="match status" value="1"/>
</dbReference>
<accession>A7ZLY5</accession>
<comment type="subcellular location">
    <subcellularLocation>
        <location evidence="1">Cell inner membrane</location>
        <topology evidence="1">Multi-pass membrane protein</topology>
    </subcellularLocation>
</comment>
<comment type="similarity">
    <text evidence="3">Belongs to the UPF0056 (MarC) family.</text>
</comment>
<gene>
    <name type="primary">marC</name>
    <name type="ordered locus">EcE24377A_1731</name>
</gene>
<reference key="1">
    <citation type="journal article" date="2008" name="J. Bacteriol.">
        <title>The pangenome structure of Escherichia coli: comparative genomic analysis of E. coli commensal and pathogenic isolates.</title>
        <authorList>
            <person name="Rasko D.A."/>
            <person name="Rosovitz M.J."/>
            <person name="Myers G.S.A."/>
            <person name="Mongodin E.F."/>
            <person name="Fricke W.F."/>
            <person name="Gajer P."/>
            <person name="Crabtree J."/>
            <person name="Sebaihia M."/>
            <person name="Thomson N.R."/>
            <person name="Chaudhuri R."/>
            <person name="Henderson I.R."/>
            <person name="Sperandio V."/>
            <person name="Ravel J."/>
        </authorList>
    </citation>
    <scope>NUCLEOTIDE SEQUENCE [LARGE SCALE GENOMIC DNA]</scope>
    <source>
        <strain>E24377A / ETEC</strain>
    </source>
</reference>
<sequence>MLDLFKAIGLGLVVLLPLANPLTTVALFLGLAGNMNSAERNRQSLMASVYVFAIMMVAYYAGQLVMDTFGISIPGLRIAGGLIVAFIGFRMLFPQQKAIDSPEAKSKSEELEDEPSANIAFVPLAMPSTAGPGTIAMIISSASTVRQSSTFADWVLMVAPPLIFFLVAVILWGSLRSSGAIMRLVGKGGIEAISRLMGFLLVCMGVQFIINGILEIIKTYH</sequence>